<dbReference type="EC" id="2.6.1.1" evidence="3"/>
<dbReference type="EC" id="2.6.1.7" evidence="3"/>
<dbReference type="EMBL" id="M11732">
    <property type="protein sequence ID" value="AAA30999.1"/>
    <property type="molecule type" value="mRNA"/>
</dbReference>
<dbReference type="EMBL" id="F14822">
    <property type="protein sequence ID" value="CAA23279.1"/>
    <property type="molecule type" value="mRNA"/>
</dbReference>
<dbReference type="PIR" id="A25165">
    <property type="entry name" value="XNPGDM"/>
</dbReference>
<dbReference type="RefSeq" id="NP_999093.1">
    <property type="nucleotide sequence ID" value="NM_213928.1"/>
</dbReference>
<dbReference type="SMR" id="P00506"/>
<dbReference type="FunCoup" id="P00506">
    <property type="interactions" value="1696"/>
</dbReference>
<dbReference type="STRING" id="9823.ENSSSCP00000055842"/>
<dbReference type="iPTMnet" id="P00506"/>
<dbReference type="PaxDb" id="9823-ENSSSCP00000003017"/>
<dbReference type="PeptideAtlas" id="P00506"/>
<dbReference type="Ensembl" id="ENSSSCT00035110663.1">
    <property type="protein sequence ID" value="ENSSSCP00035048324.1"/>
    <property type="gene ID" value="ENSSSCG00035080663.1"/>
</dbReference>
<dbReference type="Ensembl" id="ENSSSCT00040044357.1">
    <property type="protein sequence ID" value="ENSSSCP00040018648.1"/>
    <property type="gene ID" value="ENSSSCG00040032679.1"/>
</dbReference>
<dbReference type="Ensembl" id="ENSSSCT00040044476.1">
    <property type="protein sequence ID" value="ENSSSCP00040018700.1"/>
    <property type="gene ID" value="ENSSSCG00040032679.1"/>
</dbReference>
<dbReference type="Ensembl" id="ENSSSCT00045007235.1">
    <property type="protein sequence ID" value="ENSSSCP00045004972.1"/>
    <property type="gene ID" value="ENSSSCG00045004323.1"/>
</dbReference>
<dbReference type="Ensembl" id="ENSSSCT00050040765.1">
    <property type="protein sequence ID" value="ENSSSCP00050016831.1"/>
    <property type="gene ID" value="ENSSSCG00050030308.1"/>
</dbReference>
<dbReference type="Ensembl" id="ENSSSCT00065092962.1">
    <property type="protein sequence ID" value="ENSSSCP00065040677.1"/>
    <property type="gene ID" value="ENSSSCG00065067696.1"/>
</dbReference>
<dbReference type="Ensembl" id="ENSSSCT00085025603">
    <property type="protein sequence ID" value="ENSSSCP00085017757"/>
    <property type="gene ID" value="ENSSSCG00085013507"/>
</dbReference>
<dbReference type="Ensembl" id="ENSSSCT00090041600">
    <property type="protein sequence ID" value="ENSSSCP00090025743"/>
    <property type="gene ID" value="ENSSSCG00090023523"/>
</dbReference>
<dbReference type="Ensembl" id="ENSSSCT00105052451">
    <property type="protein sequence ID" value="ENSSSCP00105036885"/>
    <property type="gene ID" value="ENSSSCG00105027578"/>
</dbReference>
<dbReference type="Ensembl" id="ENSSSCT00115026160">
    <property type="protein sequence ID" value="ENSSSCP00115024779"/>
    <property type="gene ID" value="ENSSSCG00115015026"/>
</dbReference>
<dbReference type="Ensembl" id="ENSSSCT00130003148">
    <property type="protein sequence ID" value="ENSSSCP00130002261"/>
    <property type="gene ID" value="ENSSSCG00130001630"/>
</dbReference>
<dbReference type="GeneID" id="396968"/>
<dbReference type="KEGG" id="ssc:396968"/>
<dbReference type="CTD" id="2806"/>
<dbReference type="eggNOG" id="KOG1411">
    <property type="taxonomic scope" value="Eukaryota"/>
</dbReference>
<dbReference type="InParanoid" id="P00506"/>
<dbReference type="OrthoDB" id="6752799at2759"/>
<dbReference type="Reactome" id="R-SSC-389661">
    <property type="pathway name" value="Glyoxylate metabolism and glycine degradation"/>
</dbReference>
<dbReference type="Reactome" id="R-SSC-8963693">
    <property type="pathway name" value="Aspartate and asparagine metabolism"/>
</dbReference>
<dbReference type="Reactome" id="R-SSC-8964539">
    <property type="pathway name" value="Glutamate and glutamine metabolism"/>
</dbReference>
<dbReference type="Reactome" id="R-SSC-9856872">
    <property type="pathway name" value="Malate-aspartate shuttle"/>
</dbReference>
<dbReference type="SABIO-RK" id="P00506"/>
<dbReference type="Proteomes" id="UP000008227">
    <property type="component" value="Unplaced"/>
</dbReference>
<dbReference type="Proteomes" id="UP000314985">
    <property type="component" value="Unplaced"/>
</dbReference>
<dbReference type="Proteomes" id="UP000694570">
    <property type="component" value="Unplaced"/>
</dbReference>
<dbReference type="Proteomes" id="UP000694571">
    <property type="component" value="Unplaced"/>
</dbReference>
<dbReference type="Proteomes" id="UP000694720">
    <property type="component" value="Unplaced"/>
</dbReference>
<dbReference type="Proteomes" id="UP000694722">
    <property type="component" value="Unplaced"/>
</dbReference>
<dbReference type="Proteomes" id="UP000694723">
    <property type="component" value="Unplaced"/>
</dbReference>
<dbReference type="Proteomes" id="UP000694724">
    <property type="component" value="Unplaced"/>
</dbReference>
<dbReference type="Proteomes" id="UP000694725">
    <property type="component" value="Unplaced"/>
</dbReference>
<dbReference type="Proteomes" id="UP000694726">
    <property type="component" value="Unplaced"/>
</dbReference>
<dbReference type="Proteomes" id="UP000694727">
    <property type="component" value="Unplaced"/>
</dbReference>
<dbReference type="Proteomes" id="UP000694728">
    <property type="component" value="Unplaced"/>
</dbReference>
<dbReference type="Bgee" id="ENSSSCG00000032985">
    <property type="expression patterns" value="Expressed in psoas major muscle and 44 other cell types or tissues"/>
</dbReference>
<dbReference type="ExpressionAtlas" id="P00506">
    <property type="expression patterns" value="baseline and differential"/>
</dbReference>
<dbReference type="GO" id="GO:0005743">
    <property type="term" value="C:mitochondrial inner membrane"/>
    <property type="evidence" value="ECO:0000250"/>
    <property type="project" value="AgBase"/>
</dbReference>
<dbReference type="GO" id="GO:0005759">
    <property type="term" value="C:mitochondrial matrix"/>
    <property type="evidence" value="ECO:0007669"/>
    <property type="project" value="UniProtKB-SubCell"/>
</dbReference>
<dbReference type="GO" id="GO:0005739">
    <property type="term" value="C:mitochondrion"/>
    <property type="evidence" value="ECO:0000250"/>
    <property type="project" value="UniProtKB"/>
</dbReference>
<dbReference type="GO" id="GO:0005886">
    <property type="term" value="C:plasma membrane"/>
    <property type="evidence" value="ECO:0007669"/>
    <property type="project" value="UniProtKB-SubCell"/>
</dbReference>
<dbReference type="GO" id="GO:0016212">
    <property type="term" value="F:kynurenine-oxoglutarate transaminase activity"/>
    <property type="evidence" value="ECO:0007669"/>
    <property type="project" value="UniProtKB-EC"/>
</dbReference>
<dbReference type="GO" id="GO:0004069">
    <property type="term" value="F:L-aspartate:2-oxoglutarate aminotransferase activity"/>
    <property type="evidence" value="ECO:0000250"/>
    <property type="project" value="UniProtKB"/>
</dbReference>
<dbReference type="GO" id="GO:0030170">
    <property type="term" value="F:pyridoxal phosphate binding"/>
    <property type="evidence" value="ECO:0007669"/>
    <property type="project" value="InterPro"/>
</dbReference>
<dbReference type="GO" id="GO:0006103">
    <property type="term" value="P:2-oxoglutarate metabolic process"/>
    <property type="evidence" value="ECO:0000250"/>
    <property type="project" value="UniProtKB"/>
</dbReference>
<dbReference type="GO" id="GO:0006533">
    <property type="term" value="P:aspartate catabolic process"/>
    <property type="evidence" value="ECO:0000318"/>
    <property type="project" value="GO_Central"/>
</dbReference>
<dbReference type="GO" id="GO:0006531">
    <property type="term" value="P:aspartate metabolic process"/>
    <property type="evidence" value="ECO:0000250"/>
    <property type="project" value="UniProtKB"/>
</dbReference>
<dbReference type="GO" id="GO:0009058">
    <property type="term" value="P:biosynthetic process"/>
    <property type="evidence" value="ECO:0007669"/>
    <property type="project" value="InterPro"/>
</dbReference>
<dbReference type="GO" id="GO:0006536">
    <property type="term" value="P:glutamate metabolic process"/>
    <property type="evidence" value="ECO:0000250"/>
    <property type="project" value="UniProtKB"/>
</dbReference>
<dbReference type="GO" id="GO:0006869">
    <property type="term" value="P:lipid transport"/>
    <property type="evidence" value="ECO:0007669"/>
    <property type="project" value="UniProtKB-KW"/>
</dbReference>
<dbReference type="CDD" id="cd00609">
    <property type="entry name" value="AAT_like"/>
    <property type="match status" value="1"/>
</dbReference>
<dbReference type="FunFam" id="3.40.640.10:FF:000026">
    <property type="entry name" value="Aspartate aminotransferase"/>
    <property type="match status" value="1"/>
</dbReference>
<dbReference type="FunFam" id="3.90.1150.10:FF:000001">
    <property type="entry name" value="Aspartate aminotransferase"/>
    <property type="match status" value="1"/>
</dbReference>
<dbReference type="FunFam" id="3.90.1150.10:FF:000160">
    <property type="entry name" value="Similar to aspartate aminotransferase"/>
    <property type="match status" value="1"/>
</dbReference>
<dbReference type="Gene3D" id="3.90.1150.10">
    <property type="entry name" value="Aspartate Aminotransferase, domain 1"/>
    <property type="match status" value="1"/>
</dbReference>
<dbReference type="Gene3D" id="3.40.640.10">
    <property type="entry name" value="Type I PLP-dependent aspartate aminotransferase-like (Major domain)"/>
    <property type="match status" value="1"/>
</dbReference>
<dbReference type="InterPro" id="IPR004839">
    <property type="entry name" value="Aminotransferase_I/II_large"/>
</dbReference>
<dbReference type="InterPro" id="IPR000796">
    <property type="entry name" value="Asp_trans"/>
</dbReference>
<dbReference type="InterPro" id="IPR004838">
    <property type="entry name" value="NHTrfase_class1_PyrdxlP-BS"/>
</dbReference>
<dbReference type="InterPro" id="IPR015424">
    <property type="entry name" value="PyrdxlP-dep_Trfase"/>
</dbReference>
<dbReference type="InterPro" id="IPR015421">
    <property type="entry name" value="PyrdxlP-dep_Trfase_major"/>
</dbReference>
<dbReference type="InterPro" id="IPR015422">
    <property type="entry name" value="PyrdxlP-dep_Trfase_small"/>
</dbReference>
<dbReference type="NCBIfam" id="NF006719">
    <property type="entry name" value="PRK09257.1"/>
    <property type="match status" value="1"/>
</dbReference>
<dbReference type="PANTHER" id="PTHR11879">
    <property type="entry name" value="ASPARTATE AMINOTRANSFERASE"/>
    <property type="match status" value="1"/>
</dbReference>
<dbReference type="PANTHER" id="PTHR11879:SF22">
    <property type="entry name" value="ASPARTATE AMINOTRANSFERASE, MITOCHONDRIAL"/>
    <property type="match status" value="1"/>
</dbReference>
<dbReference type="Pfam" id="PF00155">
    <property type="entry name" value="Aminotran_1_2"/>
    <property type="match status" value="1"/>
</dbReference>
<dbReference type="PRINTS" id="PR00799">
    <property type="entry name" value="TRANSAMINASE"/>
</dbReference>
<dbReference type="SUPFAM" id="SSF53383">
    <property type="entry name" value="PLP-dependent transferases"/>
    <property type="match status" value="1"/>
</dbReference>
<dbReference type="PROSITE" id="PS00105">
    <property type="entry name" value="AA_TRANSFER_CLASS_1"/>
    <property type="match status" value="1"/>
</dbReference>
<feature type="transit peptide" description="Mitochondrion" evidence="6 7">
    <location>
        <begin position="1"/>
        <end position="29"/>
    </location>
</feature>
<feature type="chain" id="PRO_0000001217" description="Aspartate aminotransferase, mitochondrial">
    <location>
        <begin position="30"/>
        <end position="430"/>
    </location>
</feature>
<feature type="binding site" evidence="1">
    <location>
        <position position="65"/>
    </location>
    <ligand>
        <name>substrate</name>
    </ligand>
</feature>
<feature type="binding site" evidence="1">
    <location>
        <position position="162"/>
    </location>
    <ligand>
        <name>substrate</name>
    </ligand>
</feature>
<feature type="binding site" evidence="1">
    <location>
        <position position="215"/>
    </location>
    <ligand>
        <name>substrate</name>
    </ligand>
</feature>
<feature type="binding site" evidence="1">
    <location>
        <position position="407"/>
    </location>
    <ligand>
        <name>substrate</name>
    </ligand>
</feature>
<feature type="modified residue" description="Phosphothreonine" evidence="2">
    <location>
        <position position="48"/>
    </location>
</feature>
<feature type="modified residue" description="N6-acetyllysine" evidence="4">
    <location>
        <position position="59"/>
    </location>
</feature>
<feature type="modified residue" description="N6-acetyllysine; alternate" evidence="2">
    <location>
        <position position="73"/>
    </location>
</feature>
<feature type="modified residue" description="N6-succinyllysine; alternate" evidence="4">
    <location>
        <position position="73"/>
    </location>
</feature>
<feature type="modified residue" description="N6-acetyllysine" evidence="4">
    <location>
        <position position="82"/>
    </location>
</feature>
<feature type="modified residue" description="N6-acetyllysine; alternate" evidence="2">
    <location>
        <position position="90"/>
    </location>
</feature>
<feature type="modified residue" description="N6-succinyllysine; alternate" evidence="4">
    <location>
        <position position="90"/>
    </location>
</feature>
<feature type="modified residue" description="3'-nitrotyrosine; alternate" evidence="4">
    <location>
        <position position="96"/>
    </location>
</feature>
<feature type="modified residue" description="Phosphotyrosine; alternate" evidence="2">
    <location>
        <position position="96"/>
    </location>
</feature>
<feature type="modified residue" description="N6-acetyllysine; alternate" evidence="4">
    <location>
        <position position="107"/>
    </location>
</feature>
<feature type="modified residue" description="N6-succinyllysine; alternate" evidence="4">
    <location>
        <position position="107"/>
    </location>
</feature>
<feature type="modified residue" description="N6-acetyllysine; alternate" evidence="4">
    <location>
        <position position="122"/>
    </location>
</feature>
<feature type="modified residue" description="N6-succinyllysine; alternate" evidence="4">
    <location>
        <position position="122"/>
    </location>
</feature>
<feature type="modified residue" description="N6-acetyllysine; alternate" evidence="2">
    <location>
        <position position="159"/>
    </location>
</feature>
<feature type="modified residue" description="N6-succinyllysine; alternate" evidence="4">
    <location>
        <position position="159"/>
    </location>
</feature>
<feature type="modified residue" description="N6-acetyllysine; alternate" evidence="4">
    <location>
        <position position="185"/>
    </location>
</feature>
<feature type="modified residue" description="N6-succinyllysine; alternate" evidence="4">
    <location>
        <position position="185"/>
    </location>
</feature>
<feature type="modified residue" description="N6-succinyllysine" evidence="4">
    <location>
        <position position="227"/>
    </location>
</feature>
<feature type="modified residue" description="N6-acetyllysine" evidence="2">
    <location>
        <position position="234"/>
    </location>
</feature>
<feature type="modified residue" description="N6-(pyridoxal phosphate)lysine; alternate">
    <location>
        <position position="279"/>
    </location>
</feature>
<feature type="modified residue" description="N6-acetyllysine; alternate" evidence="4">
    <location>
        <position position="279"/>
    </location>
</feature>
<feature type="modified residue" description="N6-acetyllysine; alternate" evidence="2">
    <location>
        <position position="296"/>
    </location>
</feature>
<feature type="modified residue" description="N6-succinyllysine; alternate" evidence="4">
    <location>
        <position position="296"/>
    </location>
</feature>
<feature type="modified residue" description="N6-acetyllysine" evidence="4">
    <location>
        <position position="302"/>
    </location>
</feature>
<feature type="modified residue" description="N6-acetyllysine; alternate" evidence="4">
    <location>
        <position position="309"/>
    </location>
</feature>
<feature type="modified residue" description="N6-succinyllysine; alternate" evidence="5">
    <location>
        <position position="309"/>
    </location>
</feature>
<feature type="modified residue" description="Asymmetric dimethylarginine" evidence="4">
    <location>
        <position position="313"/>
    </location>
</feature>
<feature type="modified residue" description="N6-acetyllysine" evidence="4">
    <location>
        <position position="345"/>
    </location>
</feature>
<feature type="modified residue" description="N6-acetyllysine; alternate" evidence="4">
    <location>
        <position position="363"/>
    </location>
</feature>
<feature type="modified residue" description="N6-succinyllysine; alternate" evidence="4">
    <location>
        <position position="363"/>
    </location>
</feature>
<feature type="modified residue" description="N6-acetyllysine" evidence="4">
    <location>
        <position position="364"/>
    </location>
</feature>
<feature type="modified residue" description="N6-acetyllysine" evidence="4">
    <location>
        <position position="387"/>
    </location>
</feature>
<feature type="modified residue" description="N6-acetyllysine; alternate" evidence="2">
    <location>
        <position position="396"/>
    </location>
</feature>
<feature type="modified residue" description="N6-succinyllysine; alternate" evidence="4">
    <location>
        <position position="396"/>
    </location>
</feature>
<feature type="modified residue" description="N6-acetyllysine; alternate" evidence="2">
    <location>
        <position position="404"/>
    </location>
</feature>
<feature type="modified residue" description="N6-succinyllysine; alternate" evidence="4">
    <location>
        <position position="404"/>
    </location>
</feature>
<feature type="sequence conflict" description="In Ref. 3; AA sequence." evidence="8" ref="3">
    <original>N</original>
    <variation>D</variation>
    <location>
        <position position="71"/>
    </location>
</feature>
<feature type="sequence conflict" description="In Ref. 4; CAA23279." evidence="8" ref="4">
    <original>K</original>
    <variation>R</variation>
    <location>
        <position position="256"/>
    </location>
</feature>
<feature type="sequence conflict" description="In Ref. 4; CAA23279." evidence="8" ref="4">
    <original>L</original>
    <variation>F</variation>
    <location>
        <position position="273"/>
    </location>
</feature>
<feature type="sequence conflict" description="In Ref. 2; AA sequence." evidence="8" ref="2">
    <original>E</original>
    <variation>Q</variation>
    <location>
        <position position="305"/>
    </location>
</feature>
<gene>
    <name type="primary">GOT2</name>
</gene>
<proteinExistence type="evidence at protein level"/>
<protein>
    <recommendedName>
        <fullName>Aspartate aminotransferase, mitochondrial</fullName>
        <shortName>mAspAT</shortName>
        <ecNumber evidence="3">2.6.1.1</ecNumber>
        <ecNumber evidence="3">2.6.1.7</ecNumber>
    </recommendedName>
    <alternativeName>
        <fullName>Fatty acid-binding protein</fullName>
        <shortName>FABP-1</shortName>
    </alternativeName>
    <alternativeName>
        <fullName>Glutamate oxaloacetate transaminase 2</fullName>
    </alternativeName>
    <alternativeName>
        <fullName>Kynurenine aminotransferase 4</fullName>
    </alternativeName>
    <alternativeName>
        <fullName>Kynurenine aminotransferase IV</fullName>
    </alternativeName>
    <alternativeName>
        <fullName>Kynurenine--oxoglutarate transaminase 4</fullName>
    </alternativeName>
    <alternativeName>
        <fullName>Kynurenine--oxoglutarate transaminase IV</fullName>
    </alternativeName>
    <alternativeName>
        <fullName>Plasma membrane-associated fatty acid-binding protein</fullName>
        <shortName>FABPpm</shortName>
    </alternativeName>
    <alternativeName>
        <fullName>Transaminase A</fullName>
    </alternativeName>
</protein>
<sequence>MALLHSGRVLSGVASAFHPGLAAAASARASSWWAHVEMGPPDPILGVTEAFKRDTNSKKMNLGVGAYRDDNGKPYVLPSVRKAEAQIAAKNLDKEYLPIGGLAEFCKASAELALGENNEVLKSGRYVTVQTISGTGALRIGANFLQRFFKFSRDVFLPKPSWGNHTPIFRDAGMQLHSYRYYDPKTCGFDFTGALEDISKIPAQSVILLHACAHNPTGVDPRPEQWKEMATLVKKNNLFAFFDMAYQGFASGDGNKDAWAVRHFIEQGINVCLCQSYAKNMGLYGERVGAFTVVCKDAEEAKRVESQLKILIRPMYSNPPVNGARIASTILTSPDLRQQWLQEVKGMADRIISMRTQLVSNLKKEGSSHNWQHIVDQIGMFCFTGIKPEQVERLTKEFSIYMTKDGRISVAGVTSGNVGYLAHAIHQVTK</sequence>
<reference key="1">
    <citation type="journal article" date="1985" name="Proc. Natl. Acad. Sci. U.S.A.">
        <title>Cloning and sequence analysis of a cDNA encoding porcine mitochondrial aspartate aminotransferase precursor.</title>
        <authorList>
            <person name="Joh T."/>
            <person name="Nomiyama H."/>
            <person name="Maeda S."/>
            <person name="Shimada K."/>
            <person name="Morino Y."/>
        </authorList>
    </citation>
    <scope>NUCLEOTIDE SEQUENCE [MRNA]</scope>
</reference>
<reference key="2">
    <citation type="journal article" date="1980" name="Eur. J. Biochem.">
        <title>The cytosolic and mitochondrial aspartate aminotransferases from pig heart. A comparison of their primary structures, predicted secondary structures and some physical properties.</title>
        <authorList>
            <person name="Barra D."/>
            <person name="Bossa F."/>
            <person name="Doonan S."/>
            <person name="Fahmy H.M.A."/>
            <person name="Hughes G.J."/>
            <person name="Martini F."/>
            <person name="Petruzzelli R."/>
            <person name="Wittmann-Liebold B."/>
        </authorList>
    </citation>
    <scope>PROTEIN SEQUENCE OF 30-430</scope>
</reference>
<reference key="3">
    <citation type="journal article" date="1980" name="J. Biol. Chem.">
        <title>Complete amino acid sequence of mitochondrial aspartate aminotransferase from pig heart muscle. Peptide ordering procedures and the complete sequence.</title>
        <authorList>
            <person name="Kagamiyama H."/>
            <person name="Sakakibara R."/>
            <person name="Tanase S."/>
            <person name="Morino Y."/>
            <person name="Wada H."/>
        </authorList>
    </citation>
    <scope>PROTEIN SEQUENCE OF 30-430</scope>
    <source>
        <tissue>Heart muscle</tissue>
    </source>
</reference>
<reference key="4">
    <citation type="journal article" date="1996" name="Mamm. Genome">
        <title>Evaluation and characterization of a porcine small intestine cDNA library: analysis of 839 clones.</title>
        <authorList>
            <person name="Winteroe A.K."/>
            <person name="Fredholm M."/>
            <person name="Davies W."/>
        </authorList>
    </citation>
    <scope>NUCLEOTIDE SEQUENCE [LARGE SCALE MRNA] OF 256-399</scope>
    <source>
        <tissue>Small intestine</tissue>
    </source>
</reference>
<reference key="5">
    <citation type="journal article" date="1979" name="Ital. J. Biochem.">
        <title>The primary structure of mitochondrial aspartate aminotransferase from pig heart: peptides obtained by cleavage with pepsin and with Staphylococcus aureus protease.</title>
        <authorList>
            <person name="Barra D."/>
            <person name="Savi M.R."/>
            <person name="Petruzzelli R."/>
            <person name="Bossa F."/>
            <person name="Doonan S."/>
        </authorList>
    </citation>
    <scope>PARTIAL PROTEIN SEQUENCE</scope>
</reference>
<name>AATM_PIG</name>
<comment type="function">
    <text evidence="2">Catalyzes the irreversible transamination of the L-tryptophan metabolite L-kynurenine to form kynurenic acid (KA). As a member of the malate-aspartate shuttle, it has a key role in the intracellular NAD(H) redox balance. Is important for metabolite exchange between mitochondria and cytosol, and for amino acid metabolism. Facilitates cellular uptake of long-chain free fatty acids.</text>
</comment>
<comment type="catalytic activity">
    <reaction evidence="3">
        <text>L-aspartate + 2-oxoglutarate = oxaloacetate + L-glutamate</text>
        <dbReference type="Rhea" id="RHEA:21824"/>
        <dbReference type="ChEBI" id="CHEBI:16452"/>
        <dbReference type="ChEBI" id="CHEBI:16810"/>
        <dbReference type="ChEBI" id="CHEBI:29985"/>
        <dbReference type="ChEBI" id="CHEBI:29991"/>
        <dbReference type="EC" id="2.6.1.1"/>
    </reaction>
</comment>
<comment type="catalytic activity">
    <reaction evidence="3">
        <text>L-kynurenine + 2-oxoglutarate = kynurenate + L-glutamate + H2O</text>
        <dbReference type="Rhea" id="RHEA:65560"/>
        <dbReference type="ChEBI" id="CHEBI:15377"/>
        <dbReference type="ChEBI" id="CHEBI:16810"/>
        <dbReference type="ChEBI" id="CHEBI:29985"/>
        <dbReference type="ChEBI" id="CHEBI:57959"/>
        <dbReference type="ChEBI" id="CHEBI:58454"/>
        <dbReference type="EC" id="2.6.1.7"/>
    </reaction>
</comment>
<comment type="cofactor">
    <cofactor>
        <name>pyridoxal 5'-phosphate</name>
        <dbReference type="ChEBI" id="CHEBI:597326"/>
    </cofactor>
</comment>
<comment type="subunit">
    <text>Homodimer.</text>
</comment>
<comment type="subcellular location">
    <subcellularLocation>
        <location>Mitochondrion matrix</location>
    </subcellularLocation>
    <subcellularLocation>
        <location evidence="1">Cell membrane</location>
    </subcellularLocation>
</comment>
<comment type="miscellaneous">
    <text>In eukaryotes there are cytoplasmic, mitochondrial and chloroplastic isozymes.</text>
</comment>
<comment type="similarity">
    <text evidence="8">Belongs to the class-I pyridoxal-phosphate-dependent aminotransferase family.</text>
</comment>
<keyword id="KW-0007">Acetylation</keyword>
<keyword id="KW-0032">Aminotransferase</keyword>
<keyword id="KW-1003">Cell membrane</keyword>
<keyword id="KW-0903">Direct protein sequencing</keyword>
<keyword id="KW-0445">Lipid transport</keyword>
<keyword id="KW-0472">Membrane</keyword>
<keyword id="KW-0488">Methylation</keyword>
<keyword id="KW-0496">Mitochondrion</keyword>
<keyword id="KW-0944">Nitration</keyword>
<keyword id="KW-0597">Phosphoprotein</keyword>
<keyword id="KW-0663">Pyridoxal phosphate</keyword>
<keyword id="KW-1185">Reference proteome</keyword>
<keyword id="KW-0808">Transferase</keyword>
<keyword id="KW-0809">Transit peptide</keyword>
<keyword id="KW-0813">Transport</keyword>
<accession>P00506</accession>
<accession>Q29230</accession>
<evidence type="ECO:0000250" key="1"/>
<evidence type="ECO:0000250" key="2">
    <source>
        <dbReference type="UniProtKB" id="P00505"/>
    </source>
</evidence>
<evidence type="ECO:0000250" key="3">
    <source>
        <dbReference type="UniProtKB" id="P00507"/>
    </source>
</evidence>
<evidence type="ECO:0000250" key="4">
    <source>
        <dbReference type="UniProtKB" id="P05202"/>
    </source>
</evidence>
<evidence type="ECO:0000250" key="5">
    <source>
        <dbReference type="UniProtKB" id="P12344"/>
    </source>
</evidence>
<evidence type="ECO:0000269" key="6">
    <source>
    </source>
</evidence>
<evidence type="ECO:0000269" key="7">
    <source>
    </source>
</evidence>
<evidence type="ECO:0000305" key="8"/>
<organism>
    <name type="scientific">Sus scrofa</name>
    <name type="common">Pig</name>
    <dbReference type="NCBI Taxonomy" id="9823"/>
    <lineage>
        <taxon>Eukaryota</taxon>
        <taxon>Metazoa</taxon>
        <taxon>Chordata</taxon>
        <taxon>Craniata</taxon>
        <taxon>Vertebrata</taxon>
        <taxon>Euteleostomi</taxon>
        <taxon>Mammalia</taxon>
        <taxon>Eutheria</taxon>
        <taxon>Laurasiatheria</taxon>
        <taxon>Artiodactyla</taxon>
        <taxon>Suina</taxon>
        <taxon>Suidae</taxon>
        <taxon>Sus</taxon>
    </lineage>
</organism>